<evidence type="ECO:0000250" key="1"/>
<evidence type="ECO:0000250" key="2">
    <source>
        <dbReference type="UniProtKB" id="P13501"/>
    </source>
</evidence>
<evidence type="ECO:0000255" key="3"/>
<evidence type="ECO:0000305" key="4"/>
<dbReference type="EMBL" id="AF506970">
    <property type="protein sequence ID" value="AAM34212.1"/>
    <property type="molecule type" value="mRNA"/>
</dbReference>
<dbReference type="RefSeq" id="NP_001075332.1">
    <property type="nucleotide sequence ID" value="NM_001081863.2"/>
</dbReference>
<dbReference type="SMR" id="Q8MKD0"/>
<dbReference type="FunCoup" id="Q8MKD0">
    <property type="interactions" value="550"/>
</dbReference>
<dbReference type="STRING" id="9796.ENSECAP00000022430"/>
<dbReference type="PaxDb" id="9796-ENSECAP00000022430"/>
<dbReference type="GeneID" id="100033925"/>
<dbReference type="KEGG" id="ecb:100033925"/>
<dbReference type="CTD" id="6352"/>
<dbReference type="HOGENOM" id="CLU_141716_4_2_1"/>
<dbReference type="InParanoid" id="Q8MKD0"/>
<dbReference type="OMA" id="HIQEYFY"/>
<dbReference type="OrthoDB" id="8900217at2759"/>
<dbReference type="TreeFam" id="TF334888"/>
<dbReference type="Proteomes" id="UP000002281">
    <property type="component" value="Chromosome 11"/>
</dbReference>
<dbReference type="Bgee" id="ENSECAG00000024888">
    <property type="expression patterns" value="Expressed in leukocyte and 20 other cell types or tissues"/>
</dbReference>
<dbReference type="GO" id="GO:0005615">
    <property type="term" value="C:extracellular space"/>
    <property type="evidence" value="ECO:0000318"/>
    <property type="project" value="GO_Central"/>
</dbReference>
<dbReference type="GO" id="GO:0048020">
    <property type="term" value="F:CCR chemokine receptor binding"/>
    <property type="evidence" value="ECO:0000318"/>
    <property type="project" value="GO_Central"/>
</dbReference>
<dbReference type="GO" id="GO:0008009">
    <property type="term" value="F:chemokine activity"/>
    <property type="evidence" value="ECO:0000318"/>
    <property type="project" value="GO_Central"/>
</dbReference>
<dbReference type="GO" id="GO:0061844">
    <property type="term" value="P:antimicrobial humoral immune response mediated by antimicrobial peptide"/>
    <property type="evidence" value="ECO:0000318"/>
    <property type="project" value="GO_Central"/>
</dbReference>
<dbReference type="GO" id="GO:0070098">
    <property type="term" value="P:chemokine-mediated signaling pathway"/>
    <property type="evidence" value="ECO:0000250"/>
    <property type="project" value="UniProtKB"/>
</dbReference>
<dbReference type="GO" id="GO:0048245">
    <property type="term" value="P:eosinophil chemotaxis"/>
    <property type="evidence" value="ECO:0000318"/>
    <property type="project" value="GO_Central"/>
</dbReference>
<dbReference type="GO" id="GO:0007186">
    <property type="term" value="P:G protein-coupled receptor signaling pathway"/>
    <property type="evidence" value="ECO:0000250"/>
    <property type="project" value="UniProtKB"/>
</dbReference>
<dbReference type="GO" id="GO:0006954">
    <property type="term" value="P:inflammatory response"/>
    <property type="evidence" value="ECO:0000318"/>
    <property type="project" value="GO_Central"/>
</dbReference>
<dbReference type="GO" id="GO:0030335">
    <property type="term" value="P:positive regulation of cell migration"/>
    <property type="evidence" value="ECO:0000318"/>
    <property type="project" value="GO_Central"/>
</dbReference>
<dbReference type="GO" id="GO:0050796">
    <property type="term" value="P:regulation of insulin secretion"/>
    <property type="evidence" value="ECO:0000250"/>
    <property type="project" value="UniProtKB"/>
</dbReference>
<dbReference type="CDD" id="cd00272">
    <property type="entry name" value="Chemokine_CC"/>
    <property type="match status" value="1"/>
</dbReference>
<dbReference type="FunFam" id="2.40.50.40:FF:000002">
    <property type="entry name" value="C-C motif chemokine"/>
    <property type="match status" value="1"/>
</dbReference>
<dbReference type="Gene3D" id="2.40.50.40">
    <property type="match status" value="1"/>
</dbReference>
<dbReference type="InterPro" id="IPR039809">
    <property type="entry name" value="Chemokine_b/g/d"/>
</dbReference>
<dbReference type="InterPro" id="IPR000827">
    <property type="entry name" value="Chemokine_CC_CS"/>
</dbReference>
<dbReference type="InterPro" id="IPR001811">
    <property type="entry name" value="Chemokine_IL8-like_dom"/>
</dbReference>
<dbReference type="InterPro" id="IPR036048">
    <property type="entry name" value="Interleukin_8-like_sf"/>
</dbReference>
<dbReference type="PANTHER" id="PTHR12015:SF170">
    <property type="entry name" value="C-C MOTIF CHEMOKINE 5"/>
    <property type="match status" value="1"/>
</dbReference>
<dbReference type="PANTHER" id="PTHR12015">
    <property type="entry name" value="SMALL INDUCIBLE CYTOKINE A"/>
    <property type="match status" value="1"/>
</dbReference>
<dbReference type="Pfam" id="PF00048">
    <property type="entry name" value="IL8"/>
    <property type="match status" value="1"/>
</dbReference>
<dbReference type="SMART" id="SM00199">
    <property type="entry name" value="SCY"/>
    <property type="match status" value="1"/>
</dbReference>
<dbReference type="SUPFAM" id="SSF54117">
    <property type="entry name" value="Interleukin 8-like chemokines"/>
    <property type="match status" value="1"/>
</dbReference>
<dbReference type="PROSITE" id="PS00472">
    <property type="entry name" value="SMALL_CYTOKINES_CC"/>
    <property type="match status" value="1"/>
</dbReference>
<protein>
    <recommendedName>
        <fullName>C-C motif chemokine 5</fullName>
    </recommendedName>
    <alternativeName>
        <fullName>Small-inducible cytokine A5</fullName>
    </alternativeName>
    <alternativeName>
        <fullName>T-cell-specific protein RANTES</fullName>
    </alternativeName>
</protein>
<comment type="function">
    <text evidence="2">Chemoattractant for blood monocytes, memory T-helper cells and eosinophils. Causes the release of histamine from basophils and activates eosinophils. May activate several chemokine receptors including CCR1, CCR3, CCR4 and CCR5. May also be an agonist of the G protein-coupled receptor GPR75. Together with GPR75, may play a role in neuron survival through activation of a downstream signaling pathway involving the PI3, Akt and MAP kinases. By activating GPR75 may also play a role in insulin secretion by islet cells.</text>
</comment>
<comment type="subcellular location">
    <subcellularLocation>
        <location>Secreted</location>
    </subcellularLocation>
</comment>
<comment type="similarity">
    <text evidence="4">Belongs to the intercrine beta (chemokine CC) family.</text>
</comment>
<keyword id="KW-0145">Chemotaxis</keyword>
<keyword id="KW-0202">Cytokine</keyword>
<keyword id="KW-1015">Disulfide bond</keyword>
<keyword id="KW-0395">Inflammatory response</keyword>
<keyword id="KW-1185">Reference proteome</keyword>
<keyword id="KW-0964">Secreted</keyword>
<keyword id="KW-0732">Signal</keyword>
<name>CCL5_HORSE</name>
<accession>Q8MKD0</accession>
<sequence length="91" mass="10159">MKVFAAALAVILATATFCTPASASPYASDTTPCCFAYISRPLPRAHIQEYFYTSSKCSIPAVVFVTRKKRQVCANPEKKWVREYINTLEMS</sequence>
<gene>
    <name type="primary">CCL5</name>
    <name type="synonym">SCYA5</name>
</gene>
<proteinExistence type="inferred from homology"/>
<organism>
    <name type="scientific">Equus caballus</name>
    <name type="common">Horse</name>
    <dbReference type="NCBI Taxonomy" id="9796"/>
    <lineage>
        <taxon>Eukaryota</taxon>
        <taxon>Metazoa</taxon>
        <taxon>Chordata</taxon>
        <taxon>Craniata</taxon>
        <taxon>Vertebrata</taxon>
        <taxon>Euteleostomi</taxon>
        <taxon>Mammalia</taxon>
        <taxon>Eutheria</taxon>
        <taxon>Laurasiatheria</taxon>
        <taxon>Perissodactyla</taxon>
        <taxon>Equidae</taxon>
        <taxon>Equus</taxon>
    </lineage>
</organism>
<feature type="signal peptide" evidence="3">
    <location>
        <begin position="1"/>
        <end position="23"/>
    </location>
</feature>
<feature type="chain" id="PRO_0000005174" description="C-C motif chemokine 5">
    <location>
        <begin position="24"/>
        <end position="91"/>
    </location>
</feature>
<feature type="disulfide bond" evidence="1">
    <location>
        <begin position="33"/>
        <end position="57"/>
    </location>
</feature>
<feature type="disulfide bond" evidence="1">
    <location>
        <begin position="34"/>
        <end position="73"/>
    </location>
</feature>
<reference key="1">
    <citation type="submission" date="2002-04" db="EMBL/GenBank/DDBJ databases">
        <title>Equus caballus RANTES mRNA.</title>
        <authorList>
            <person name="Takafuji V.A."/>
            <person name="Sharova L.V."/>
            <person name="Crisman M.V."/>
            <person name="Howard R.D."/>
        </authorList>
    </citation>
    <scope>NUCLEOTIDE SEQUENCE [MRNA]</scope>
</reference>